<comment type="function">
    <text evidence="1 2 5">Actin-binding component of the Arp2/3 complex, a multiprotein complex that mediates actin polymerization upon stimulation by nucleation-promoting factor (NPF) (PubMed:17178911). The Arp2/3 complex mediates the formation of branched actin networks in the cytoplasm, providing the force for cell motility (PubMed:17178911). In addition to its role in the cytoplasmic cytoskeleton, the Arp2/3 complex also promotes actin polymerization in the nucleus, thereby regulating gene transcription and repair of damaged DNA (Probable). The Arp2/3 complex promotes homologous recombination (HR) repair in response to DNA damage by promoting nuclear actin polymerization, leading to drive motility of double-strand breaks (DSBs) (By similarity).</text>
</comment>
<comment type="subunit">
    <text evidence="3">Component of the Arp2/3 complex composed of actr2/arp2, actr3/arp3, arpc1 (arpc1a or arpc1b), arpc2, arpc3, arpc4 and arpc5.</text>
</comment>
<comment type="subcellular location">
    <subcellularLocation>
        <location evidence="2">Cytoplasm</location>
        <location evidence="2">Cytoskeleton</location>
    </subcellularLocation>
    <subcellularLocation>
        <location evidence="2">Cell projection</location>
    </subcellularLocation>
    <subcellularLocation>
        <location evidence="3">Nucleus</location>
    </subcellularLocation>
</comment>
<comment type="similarity">
    <text evidence="4">Belongs to the ARPC4 family.</text>
</comment>
<comment type="sequence caution" evidence="4">
    <conflict type="erroneous gene model prediction">
        <sequence resource="EMBL-CDS" id="OCT83422"/>
    </conflict>
</comment>
<gene>
    <name type="primary">arpc4</name>
    <name evidence="6" type="ORF">XELAEV_18025964mg</name>
</gene>
<name>ARPC4_XENLA</name>
<proteinExistence type="evidence at protein level"/>
<reference key="1">
    <citation type="journal article" date="2006" name="J. Cell Biol.">
        <title>Actin turnover-dependent fast dissociation of capping protein in the dendritic nucleation actin network: evidence of frequent filament severing.</title>
        <authorList>
            <person name="Miyoshi T."/>
            <person name="Tsuji T."/>
            <person name="Higashida C."/>
            <person name="Hertzog M."/>
            <person name="Fujita A."/>
            <person name="Narumiya S."/>
            <person name="Scita G."/>
            <person name="Watanabe N."/>
        </authorList>
    </citation>
    <scope>NUCLEOTIDE SEQUENCE [MRNA]</scope>
    <scope>FUNCTION</scope>
    <scope>SUBCELLULAR LOCATION</scope>
</reference>
<reference key="2">
    <citation type="journal article" date="2016" name="Nature">
        <title>Genome evolution in the allotetraploid frog Xenopus laevis.</title>
        <authorList>
            <person name="Session A.M."/>
            <person name="Uno Y."/>
            <person name="Kwon T."/>
            <person name="Chapman J.A."/>
            <person name="Toyoda A."/>
            <person name="Takahashi S."/>
            <person name="Fukui A."/>
            <person name="Hikosaka A."/>
            <person name="Suzuki A."/>
            <person name="Kondo M."/>
            <person name="van Heeringen S.J."/>
            <person name="Quigley I."/>
            <person name="Heinz S."/>
            <person name="Ogino H."/>
            <person name="Ochi H."/>
            <person name="Hellsten U."/>
            <person name="Lyons J.B."/>
            <person name="Simakov O."/>
            <person name="Putnam N."/>
            <person name="Stites J."/>
            <person name="Kuroki Y."/>
            <person name="Tanaka T."/>
            <person name="Michiue T."/>
            <person name="Watanabe M."/>
            <person name="Bogdanovic O."/>
            <person name="Lister R."/>
            <person name="Georgiou G."/>
            <person name="Paranjpe S.S."/>
            <person name="van Kruijsbergen I."/>
            <person name="Shu S."/>
            <person name="Carlson J."/>
            <person name="Kinoshita T."/>
            <person name="Ohta Y."/>
            <person name="Mawaribuchi S."/>
            <person name="Jenkins J."/>
            <person name="Grimwood J."/>
            <person name="Schmutz J."/>
            <person name="Mitros T."/>
            <person name="Mozaffari S.V."/>
            <person name="Suzuki Y."/>
            <person name="Haramoto Y."/>
            <person name="Yamamoto T.S."/>
            <person name="Takagi C."/>
            <person name="Heald R."/>
            <person name="Miller K."/>
            <person name="Haudenschild C."/>
            <person name="Kitzman J."/>
            <person name="Nakayama T."/>
            <person name="Izutsu Y."/>
            <person name="Robert J."/>
            <person name="Fortriede J."/>
            <person name="Burns K."/>
            <person name="Lotay V."/>
            <person name="Karimi K."/>
            <person name="Yasuoka Y."/>
            <person name="Dichmann D.S."/>
            <person name="Flajnik M.F."/>
            <person name="Houston D.W."/>
            <person name="Shendure J."/>
            <person name="DuPasquier L."/>
            <person name="Vize P.D."/>
            <person name="Zorn A.M."/>
            <person name="Ito M."/>
            <person name="Marcotte E.M."/>
            <person name="Wallingford J.B."/>
            <person name="Ito Y."/>
            <person name="Asashima M."/>
            <person name="Ueno N."/>
            <person name="Matsuda Y."/>
            <person name="Veenstra G.J."/>
            <person name="Fujiyama A."/>
            <person name="Harland R.M."/>
            <person name="Taira M."/>
            <person name="Rokhsar D.S."/>
        </authorList>
    </citation>
    <scope>NUCLEOTIDE SEQUENCE [LARGE SCALE GENOMIC DNA]</scope>
    <source>
        <strain>J</strain>
    </source>
</reference>
<reference key="3">
    <citation type="submission" date="2004-09" db="EMBL/GenBank/DDBJ databases">
        <authorList>
            <consortium name="NIH - Xenopus Gene Collection (XGC) project"/>
        </authorList>
    </citation>
    <scope>NUCLEOTIDE SEQUENCE [LARGE SCALE MRNA]</scope>
    <source>
        <tissue>Embryo</tissue>
    </source>
</reference>
<reference key="4">
    <citation type="journal article" date="2018" name="Nature">
        <title>Nuclear ARP2/3 drives DNA break clustering for homology-directed repair.</title>
        <authorList>
            <person name="Schrank B.R."/>
            <person name="Aparicio T."/>
            <person name="Li Y."/>
            <person name="Chang W."/>
            <person name="Chait B.T."/>
            <person name="Gundersen G.G."/>
            <person name="Gottesman M.E."/>
            <person name="Gautier J."/>
        </authorList>
    </citation>
    <scope>FUNCTION</scope>
    <scope>SUBCELLULAR LOCATION</scope>
    <scope>IDENTIFICATION IN THE ARP2/3 COMPLEX</scope>
    <scope>IDENTIFICATION BY MASS SPECTROMETRY</scope>
</reference>
<protein>
    <recommendedName>
        <fullName>Actin-related protein 2/3 complex subunit 4</fullName>
    </recommendedName>
</protein>
<dbReference type="EMBL" id="EF011870">
    <property type="protein sequence ID" value="ABL63903.1"/>
    <property type="molecule type" value="mRNA"/>
</dbReference>
<dbReference type="EMBL" id="CM004473">
    <property type="protein sequence ID" value="OCT83422.1"/>
    <property type="status" value="ALT_SEQ"/>
    <property type="molecule type" value="Genomic_DNA"/>
</dbReference>
<dbReference type="EMBL" id="BC082370">
    <property type="protein sequence ID" value="AAH82370.1"/>
    <property type="molecule type" value="mRNA"/>
</dbReference>
<dbReference type="RefSeq" id="NP_001087956.1">
    <property type="nucleotide sequence ID" value="NM_001094487.1"/>
</dbReference>
<dbReference type="SMR" id="Q641G7"/>
<dbReference type="IntAct" id="Q641G7">
    <property type="interactions" value="1"/>
</dbReference>
<dbReference type="MINT" id="Q641G7"/>
<dbReference type="STRING" id="8355.Q641G7"/>
<dbReference type="PaxDb" id="8355-Q641G7"/>
<dbReference type="DNASU" id="494639"/>
<dbReference type="GeneID" id="494639"/>
<dbReference type="KEGG" id="xla:108714705"/>
<dbReference type="KEGG" id="xla:494639"/>
<dbReference type="CTD" id="108714705"/>
<dbReference type="CTD" id="494639"/>
<dbReference type="OrthoDB" id="336240at2759"/>
<dbReference type="Proteomes" id="UP000186698">
    <property type="component" value="Chromosome 4L"/>
</dbReference>
<dbReference type="Proteomes" id="UP000186698">
    <property type="component" value="Chromosome 4S"/>
</dbReference>
<dbReference type="Proteomes" id="UP000694892">
    <property type="component" value="Chromosome 4S"/>
</dbReference>
<dbReference type="Bgee" id="108714705">
    <property type="expression patterns" value="Expressed in spleen and 19 other cell types or tissues"/>
</dbReference>
<dbReference type="GO" id="GO:0005885">
    <property type="term" value="C:Arp2/3 protein complex"/>
    <property type="evidence" value="ECO:0000314"/>
    <property type="project" value="UniProtKB"/>
</dbReference>
<dbReference type="GO" id="GO:0042995">
    <property type="term" value="C:cell projection"/>
    <property type="evidence" value="ECO:0007669"/>
    <property type="project" value="UniProtKB-SubCell"/>
</dbReference>
<dbReference type="GO" id="GO:0005737">
    <property type="term" value="C:cytoplasm"/>
    <property type="evidence" value="ECO:0007669"/>
    <property type="project" value="UniProtKB-KW"/>
</dbReference>
<dbReference type="GO" id="GO:0005634">
    <property type="term" value="C:nucleus"/>
    <property type="evidence" value="ECO:0000314"/>
    <property type="project" value="UniProtKB"/>
</dbReference>
<dbReference type="GO" id="GO:0035861">
    <property type="term" value="C:site of double-strand break"/>
    <property type="evidence" value="ECO:0000314"/>
    <property type="project" value="UniProtKB"/>
</dbReference>
<dbReference type="GO" id="GO:0051015">
    <property type="term" value="F:actin filament binding"/>
    <property type="evidence" value="ECO:0000318"/>
    <property type="project" value="GO_Central"/>
</dbReference>
<dbReference type="GO" id="GO:0030041">
    <property type="term" value="P:actin filament polymerization"/>
    <property type="evidence" value="ECO:0007669"/>
    <property type="project" value="InterPro"/>
</dbReference>
<dbReference type="GO" id="GO:0034314">
    <property type="term" value="P:Arp2/3 complex-mediated actin nucleation"/>
    <property type="evidence" value="ECO:0000318"/>
    <property type="project" value="GO_Central"/>
</dbReference>
<dbReference type="FunFam" id="3.30.1460.20:FF:000001">
    <property type="entry name" value="Actin-related protein 2/3 complex subunit 4"/>
    <property type="match status" value="1"/>
</dbReference>
<dbReference type="Gene3D" id="3.30.1460.20">
    <property type="match status" value="1"/>
</dbReference>
<dbReference type="InterPro" id="IPR034666">
    <property type="entry name" value="ARPC2/4"/>
</dbReference>
<dbReference type="InterPro" id="IPR008384">
    <property type="entry name" value="ARPC4"/>
</dbReference>
<dbReference type="PANTHER" id="PTHR22629:SF0">
    <property type="entry name" value="ACTIN-RELATED PROTEIN 2_3 COMPLEX SUBUNIT 4"/>
    <property type="match status" value="1"/>
</dbReference>
<dbReference type="PANTHER" id="PTHR22629">
    <property type="entry name" value="ARP2/3 COMPLEX 20 KD SUBUNIT"/>
    <property type="match status" value="1"/>
</dbReference>
<dbReference type="Pfam" id="PF05856">
    <property type="entry name" value="ARPC4"/>
    <property type="match status" value="1"/>
</dbReference>
<dbReference type="PIRSF" id="PIRSF039100">
    <property type="entry name" value="ARPC4"/>
    <property type="match status" value="1"/>
</dbReference>
<dbReference type="SUPFAM" id="SSF69645">
    <property type="entry name" value="Arp2/3 complex subunits"/>
    <property type="match status" value="1"/>
</dbReference>
<evidence type="ECO:0000250" key="1">
    <source>
        <dbReference type="UniProtKB" id="P59998"/>
    </source>
</evidence>
<evidence type="ECO:0000269" key="2">
    <source>
    </source>
</evidence>
<evidence type="ECO:0000269" key="3">
    <source>
    </source>
</evidence>
<evidence type="ECO:0000305" key="4"/>
<evidence type="ECO:0000305" key="5">
    <source>
    </source>
</evidence>
<evidence type="ECO:0000312" key="6">
    <source>
        <dbReference type="EMBL" id="OCT83422.1"/>
    </source>
</evidence>
<organism>
    <name type="scientific">Xenopus laevis</name>
    <name type="common">African clawed frog</name>
    <dbReference type="NCBI Taxonomy" id="8355"/>
    <lineage>
        <taxon>Eukaryota</taxon>
        <taxon>Metazoa</taxon>
        <taxon>Chordata</taxon>
        <taxon>Craniata</taxon>
        <taxon>Vertebrata</taxon>
        <taxon>Euteleostomi</taxon>
        <taxon>Amphibia</taxon>
        <taxon>Batrachia</taxon>
        <taxon>Anura</taxon>
        <taxon>Pipoidea</taxon>
        <taxon>Pipidae</taxon>
        <taxon>Xenopodinae</taxon>
        <taxon>Xenopus</taxon>
        <taxon>Xenopus</taxon>
    </lineage>
</organism>
<keyword id="KW-0009">Actin-binding</keyword>
<keyword id="KW-0966">Cell projection</keyword>
<keyword id="KW-0963">Cytoplasm</keyword>
<keyword id="KW-0206">Cytoskeleton</keyword>
<keyword id="KW-0539">Nucleus</keyword>
<keyword id="KW-1185">Reference proteome</keyword>
<feature type="chain" id="PRO_0000445563" description="Actin-related protein 2/3 complex subunit 4">
    <location>
        <begin position="1"/>
        <end position="168"/>
    </location>
</feature>
<accession>Q641G7</accession>
<accession>A0A1L8GHV5</accession>
<sequence length="168" mass="19692">MTATLRPYLNAVRATLQAALCLENFSSQVVERHNKPEVEVRSSKELLLQPVVISRNEKEKVLIEGSINSVRVSIAVKQADEIEKILCHKFMRFMMMRAENFFILRRKPVEGYDISFLITNFHTEQMYKHKLVDFVIHFMEEIDKEISEMKLSVNARARIVAEEFLKNF</sequence>